<dbReference type="EMBL" id="CP000153">
    <property type="protein sequence ID" value="ABB43578.1"/>
    <property type="molecule type" value="Genomic_DNA"/>
</dbReference>
<dbReference type="RefSeq" id="WP_011371933.1">
    <property type="nucleotide sequence ID" value="NC_007575.1"/>
</dbReference>
<dbReference type="SMR" id="Q30TV3"/>
<dbReference type="STRING" id="326298.Suden_0297"/>
<dbReference type="KEGG" id="tdn:Suden_0297"/>
<dbReference type="eggNOG" id="COG0198">
    <property type="taxonomic scope" value="Bacteria"/>
</dbReference>
<dbReference type="HOGENOM" id="CLU_093315_3_0_7"/>
<dbReference type="OrthoDB" id="9807419at2"/>
<dbReference type="Proteomes" id="UP000002714">
    <property type="component" value="Chromosome"/>
</dbReference>
<dbReference type="GO" id="GO:1990904">
    <property type="term" value="C:ribonucleoprotein complex"/>
    <property type="evidence" value="ECO:0007669"/>
    <property type="project" value="UniProtKB-KW"/>
</dbReference>
<dbReference type="GO" id="GO:0005840">
    <property type="term" value="C:ribosome"/>
    <property type="evidence" value="ECO:0007669"/>
    <property type="project" value="UniProtKB-KW"/>
</dbReference>
<dbReference type="GO" id="GO:0019843">
    <property type="term" value="F:rRNA binding"/>
    <property type="evidence" value="ECO:0007669"/>
    <property type="project" value="UniProtKB-UniRule"/>
</dbReference>
<dbReference type="GO" id="GO:0003735">
    <property type="term" value="F:structural constituent of ribosome"/>
    <property type="evidence" value="ECO:0007669"/>
    <property type="project" value="InterPro"/>
</dbReference>
<dbReference type="GO" id="GO:0006412">
    <property type="term" value="P:translation"/>
    <property type="evidence" value="ECO:0007669"/>
    <property type="project" value="UniProtKB-UniRule"/>
</dbReference>
<dbReference type="CDD" id="cd06089">
    <property type="entry name" value="KOW_RPL26"/>
    <property type="match status" value="1"/>
</dbReference>
<dbReference type="Gene3D" id="2.30.30.30">
    <property type="match status" value="1"/>
</dbReference>
<dbReference type="HAMAP" id="MF_01326_B">
    <property type="entry name" value="Ribosomal_uL24_B"/>
    <property type="match status" value="1"/>
</dbReference>
<dbReference type="InterPro" id="IPR005824">
    <property type="entry name" value="KOW"/>
</dbReference>
<dbReference type="InterPro" id="IPR014722">
    <property type="entry name" value="Rib_uL2_dom2"/>
</dbReference>
<dbReference type="InterPro" id="IPR003256">
    <property type="entry name" value="Ribosomal_uL24"/>
</dbReference>
<dbReference type="InterPro" id="IPR005825">
    <property type="entry name" value="Ribosomal_uL24_CS"/>
</dbReference>
<dbReference type="InterPro" id="IPR041988">
    <property type="entry name" value="Ribosomal_uL24_KOW"/>
</dbReference>
<dbReference type="InterPro" id="IPR008991">
    <property type="entry name" value="Translation_prot_SH3-like_sf"/>
</dbReference>
<dbReference type="NCBIfam" id="TIGR01079">
    <property type="entry name" value="rplX_bact"/>
    <property type="match status" value="1"/>
</dbReference>
<dbReference type="PANTHER" id="PTHR12903">
    <property type="entry name" value="MITOCHONDRIAL RIBOSOMAL PROTEIN L24"/>
    <property type="match status" value="1"/>
</dbReference>
<dbReference type="Pfam" id="PF00467">
    <property type="entry name" value="KOW"/>
    <property type="match status" value="1"/>
</dbReference>
<dbReference type="Pfam" id="PF17136">
    <property type="entry name" value="ribosomal_L24"/>
    <property type="match status" value="1"/>
</dbReference>
<dbReference type="SMART" id="SM00739">
    <property type="entry name" value="KOW"/>
    <property type="match status" value="1"/>
</dbReference>
<dbReference type="SUPFAM" id="SSF50104">
    <property type="entry name" value="Translation proteins SH3-like domain"/>
    <property type="match status" value="1"/>
</dbReference>
<dbReference type="PROSITE" id="PS01108">
    <property type="entry name" value="RIBOSOMAL_L24"/>
    <property type="match status" value="1"/>
</dbReference>
<sequence length="76" mass="8305">MAKFKFKKGDTVEIIAGDDRGTKATVLAVLPKKNKVIVEGCKIVKKAIKPTEENTKGGHLNKEMPIDVSNVRKVEA</sequence>
<comment type="function">
    <text evidence="1">One of two assembly initiator proteins, it binds directly to the 5'-end of the 23S rRNA, where it nucleates assembly of the 50S subunit.</text>
</comment>
<comment type="function">
    <text evidence="1">One of the proteins that surrounds the polypeptide exit tunnel on the outside of the subunit.</text>
</comment>
<comment type="subunit">
    <text evidence="1">Part of the 50S ribosomal subunit.</text>
</comment>
<comment type="similarity">
    <text evidence="1">Belongs to the universal ribosomal protein uL24 family.</text>
</comment>
<reference key="1">
    <citation type="journal article" date="2008" name="Appl. Environ. Microbiol.">
        <title>Genome of the epsilonproteobacterial chemolithoautotroph Sulfurimonas denitrificans.</title>
        <authorList>
            <person name="Sievert S.M."/>
            <person name="Scott K.M."/>
            <person name="Klotz M.G."/>
            <person name="Chain P.S.G."/>
            <person name="Hauser L.J."/>
            <person name="Hemp J."/>
            <person name="Huegler M."/>
            <person name="Land M."/>
            <person name="Lapidus A."/>
            <person name="Larimer F.W."/>
            <person name="Lucas S."/>
            <person name="Malfatti S.A."/>
            <person name="Meyer F."/>
            <person name="Paulsen I.T."/>
            <person name="Ren Q."/>
            <person name="Simon J."/>
            <person name="Bailey K."/>
            <person name="Diaz E."/>
            <person name="Fitzpatrick K.A."/>
            <person name="Glover B."/>
            <person name="Gwatney N."/>
            <person name="Korajkic A."/>
            <person name="Long A."/>
            <person name="Mobberley J.M."/>
            <person name="Pantry S.N."/>
            <person name="Pazder G."/>
            <person name="Peterson S."/>
            <person name="Quintanilla J.D."/>
            <person name="Sprinkle R."/>
            <person name="Stephens J."/>
            <person name="Thomas P."/>
            <person name="Vaughn R."/>
            <person name="Weber M.J."/>
            <person name="Wooten L.L."/>
        </authorList>
    </citation>
    <scope>NUCLEOTIDE SEQUENCE [LARGE SCALE GENOMIC DNA]</scope>
    <source>
        <strain>ATCC 33889 / DSM 1251</strain>
    </source>
</reference>
<accession>Q30TV3</accession>
<protein>
    <recommendedName>
        <fullName evidence="1">Large ribosomal subunit protein uL24</fullName>
    </recommendedName>
    <alternativeName>
        <fullName evidence="2">50S ribosomal protein L24</fullName>
    </alternativeName>
</protein>
<proteinExistence type="inferred from homology"/>
<feature type="chain" id="PRO_0000241682" description="Large ribosomal subunit protein uL24">
    <location>
        <begin position="1"/>
        <end position="76"/>
    </location>
</feature>
<evidence type="ECO:0000255" key="1">
    <source>
        <dbReference type="HAMAP-Rule" id="MF_01326"/>
    </source>
</evidence>
<evidence type="ECO:0000305" key="2"/>
<keyword id="KW-1185">Reference proteome</keyword>
<keyword id="KW-0687">Ribonucleoprotein</keyword>
<keyword id="KW-0689">Ribosomal protein</keyword>
<keyword id="KW-0694">RNA-binding</keyword>
<keyword id="KW-0699">rRNA-binding</keyword>
<gene>
    <name evidence="1" type="primary">rplX</name>
    <name type="ordered locus">Suden_0297</name>
</gene>
<name>RL24_SULDN</name>
<organism>
    <name type="scientific">Sulfurimonas denitrificans (strain ATCC 33889 / DSM 1251)</name>
    <name type="common">Thiomicrospira denitrificans (strain ATCC 33889 / DSM 1251)</name>
    <dbReference type="NCBI Taxonomy" id="326298"/>
    <lineage>
        <taxon>Bacteria</taxon>
        <taxon>Pseudomonadati</taxon>
        <taxon>Campylobacterota</taxon>
        <taxon>Epsilonproteobacteria</taxon>
        <taxon>Campylobacterales</taxon>
        <taxon>Sulfurimonadaceae</taxon>
        <taxon>Sulfurimonas</taxon>
    </lineage>
</organism>